<name>SYR_XANCB</name>
<accession>B0RXM6</accession>
<protein>
    <recommendedName>
        <fullName evidence="1">Arginine--tRNA ligase</fullName>
        <ecNumber evidence="1">6.1.1.19</ecNumber>
    </recommendedName>
    <alternativeName>
        <fullName evidence="1">Arginyl-tRNA synthetase</fullName>
        <shortName evidence="1">ArgRS</shortName>
    </alternativeName>
</protein>
<reference key="1">
    <citation type="journal article" date="2008" name="J. Biotechnol.">
        <title>The genome of Xanthomonas campestris pv. campestris B100 and its use for the reconstruction of metabolic pathways involved in xanthan biosynthesis.</title>
        <authorList>
            <person name="Vorhoelter F.-J."/>
            <person name="Schneiker S."/>
            <person name="Goesmann A."/>
            <person name="Krause L."/>
            <person name="Bekel T."/>
            <person name="Kaiser O."/>
            <person name="Linke B."/>
            <person name="Patschkowski T."/>
            <person name="Rueckert C."/>
            <person name="Schmid J."/>
            <person name="Sidhu V.K."/>
            <person name="Sieber V."/>
            <person name="Tauch A."/>
            <person name="Watt S.A."/>
            <person name="Weisshaar B."/>
            <person name="Becker A."/>
            <person name="Niehaus K."/>
            <person name="Puehler A."/>
        </authorList>
    </citation>
    <scope>NUCLEOTIDE SEQUENCE [LARGE SCALE GENOMIC DNA]</scope>
    <source>
        <strain>B100</strain>
    </source>
</reference>
<organism>
    <name type="scientific">Xanthomonas campestris pv. campestris (strain B100)</name>
    <dbReference type="NCBI Taxonomy" id="509169"/>
    <lineage>
        <taxon>Bacteria</taxon>
        <taxon>Pseudomonadati</taxon>
        <taxon>Pseudomonadota</taxon>
        <taxon>Gammaproteobacteria</taxon>
        <taxon>Lysobacterales</taxon>
        <taxon>Lysobacteraceae</taxon>
        <taxon>Xanthomonas</taxon>
    </lineage>
</organism>
<evidence type="ECO:0000255" key="1">
    <source>
        <dbReference type="HAMAP-Rule" id="MF_00123"/>
    </source>
</evidence>
<dbReference type="EC" id="6.1.1.19" evidence="1"/>
<dbReference type="EMBL" id="AM920689">
    <property type="protein sequence ID" value="CAP53412.1"/>
    <property type="molecule type" value="Genomic_DNA"/>
</dbReference>
<dbReference type="SMR" id="B0RXM6"/>
<dbReference type="KEGG" id="xca:xcc-b100_4045"/>
<dbReference type="HOGENOM" id="CLU_006406_0_1_6"/>
<dbReference type="Proteomes" id="UP000001188">
    <property type="component" value="Chromosome"/>
</dbReference>
<dbReference type="GO" id="GO:0005737">
    <property type="term" value="C:cytoplasm"/>
    <property type="evidence" value="ECO:0007669"/>
    <property type="project" value="UniProtKB-SubCell"/>
</dbReference>
<dbReference type="GO" id="GO:0004814">
    <property type="term" value="F:arginine-tRNA ligase activity"/>
    <property type="evidence" value="ECO:0007669"/>
    <property type="project" value="UniProtKB-UniRule"/>
</dbReference>
<dbReference type="GO" id="GO:0005524">
    <property type="term" value="F:ATP binding"/>
    <property type="evidence" value="ECO:0007669"/>
    <property type="project" value="UniProtKB-UniRule"/>
</dbReference>
<dbReference type="GO" id="GO:0006420">
    <property type="term" value="P:arginyl-tRNA aminoacylation"/>
    <property type="evidence" value="ECO:0007669"/>
    <property type="project" value="UniProtKB-UniRule"/>
</dbReference>
<dbReference type="CDD" id="cd00671">
    <property type="entry name" value="ArgRS_core"/>
    <property type="match status" value="1"/>
</dbReference>
<dbReference type="FunFam" id="1.10.730.10:FF:000008">
    <property type="entry name" value="Arginine--tRNA ligase"/>
    <property type="match status" value="1"/>
</dbReference>
<dbReference type="FunFam" id="3.30.1360.70:FF:000003">
    <property type="entry name" value="Arginine--tRNA ligase"/>
    <property type="match status" value="1"/>
</dbReference>
<dbReference type="FunFam" id="3.40.50.620:FF:000062">
    <property type="entry name" value="Arginine--tRNA ligase"/>
    <property type="match status" value="1"/>
</dbReference>
<dbReference type="Gene3D" id="3.30.1360.70">
    <property type="entry name" value="Arginyl tRNA synthetase N-terminal domain"/>
    <property type="match status" value="1"/>
</dbReference>
<dbReference type="Gene3D" id="3.40.50.620">
    <property type="entry name" value="HUPs"/>
    <property type="match status" value="1"/>
</dbReference>
<dbReference type="Gene3D" id="1.10.730.10">
    <property type="entry name" value="Isoleucyl-tRNA Synthetase, Domain 1"/>
    <property type="match status" value="1"/>
</dbReference>
<dbReference type="HAMAP" id="MF_00123">
    <property type="entry name" value="Arg_tRNA_synth"/>
    <property type="match status" value="1"/>
</dbReference>
<dbReference type="InterPro" id="IPR001412">
    <property type="entry name" value="aa-tRNA-synth_I_CS"/>
</dbReference>
<dbReference type="InterPro" id="IPR001278">
    <property type="entry name" value="Arg-tRNA-ligase"/>
</dbReference>
<dbReference type="InterPro" id="IPR005148">
    <property type="entry name" value="Arg-tRNA-synth_N"/>
</dbReference>
<dbReference type="InterPro" id="IPR036695">
    <property type="entry name" value="Arg-tRNA-synth_N_sf"/>
</dbReference>
<dbReference type="InterPro" id="IPR035684">
    <property type="entry name" value="ArgRS_core"/>
</dbReference>
<dbReference type="InterPro" id="IPR008909">
    <property type="entry name" value="DALR_anticod-bd"/>
</dbReference>
<dbReference type="InterPro" id="IPR014729">
    <property type="entry name" value="Rossmann-like_a/b/a_fold"/>
</dbReference>
<dbReference type="InterPro" id="IPR009080">
    <property type="entry name" value="tRNAsynth_Ia_anticodon-bd"/>
</dbReference>
<dbReference type="NCBIfam" id="TIGR00456">
    <property type="entry name" value="argS"/>
    <property type="match status" value="1"/>
</dbReference>
<dbReference type="PANTHER" id="PTHR11956:SF5">
    <property type="entry name" value="ARGININE--TRNA LIGASE, CYTOPLASMIC"/>
    <property type="match status" value="1"/>
</dbReference>
<dbReference type="PANTHER" id="PTHR11956">
    <property type="entry name" value="ARGINYL-TRNA SYNTHETASE"/>
    <property type="match status" value="1"/>
</dbReference>
<dbReference type="Pfam" id="PF03485">
    <property type="entry name" value="Arg_tRNA_synt_N"/>
    <property type="match status" value="1"/>
</dbReference>
<dbReference type="Pfam" id="PF05746">
    <property type="entry name" value="DALR_1"/>
    <property type="match status" value="1"/>
</dbReference>
<dbReference type="Pfam" id="PF00750">
    <property type="entry name" value="tRNA-synt_1d"/>
    <property type="match status" value="1"/>
</dbReference>
<dbReference type="PRINTS" id="PR01038">
    <property type="entry name" value="TRNASYNTHARG"/>
</dbReference>
<dbReference type="SMART" id="SM01016">
    <property type="entry name" value="Arg_tRNA_synt_N"/>
    <property type="match status" value="1"/>
</dbReference>
<dbReference type="SMART" id="SM00836">
    <property type="entry name" value="DALR_1"/>
    <property type="match status" value="1"/>
</dbReference>
<dbReference type="SUPFAM" id="SSF47323">
    <property type="entry name" value="Anticodon-binding domain of a subclass of class I aminoacyl-tRNA synthetases"/>
    <property type="match status" value="1"/>
</dbReference>
<dbReference type="SUPFAM" id="SSF55190">
    <property type="entry name" value="Arginyl-tRNA synthetase (ArgRS), N-terminal 'additional' domain"/>
    <property type="match status" value="1"/>
</dbReference>
<dbReference type="SUPFAM" id="SSF52374">
    <property type="entry name" value="Nucleotidylyl transferase"/>
    <property type="match status" value="1"/>
</dbReference>
<dbReference type="PROSITE" id="PS00178">
    <property type="entry name" value="AA_TRNA_LIGASE_I"/>
    <property type="match status" value="1"/>
</dbReference>
<feature type="chain" id="PRO_1000095420" description="Arginine--tRNA ligase">
    <location>
        <begin position="1"/>
        <end position="562"/>
    </location>
</feature>
<feature type="short sequence motif" description="'HIGH' region">
    <location>
        <begin position="129"/>
        <end position="139"/>
    </location>
</feature>
<gene>
    <name evidence="1" type="primary">argS</name>
    <name type="ordered locus">xcc-b100_4045</name>
</gene>
<sequence>MKAQLRALIGQGIEALRANGTLPADTLPPDFVVERPKTREHGDFATNAAMLLAKAARSNPRALAQALLAALPASDDVARVEIAGPGFINFHLTPAAYQREVIHVIKQGHDYGRGLAGNGRSVGVEYVSANPTGPLHVGHGRAAAIGDSLARVLDANGWNVKREFYYNDAGVQIENLALSVQARAQGLTPDSAGWPENGYRGDYIADVAKAYLAGDTVDLEGHLVTGTKDPADLESIRRFAVAYLRNEQNHDLAAFRVDFDIYFLESSLYKDGKVDEAVQKLIASGHTYEEGGALWLKSTDFGDDKDRVMRKSDGTYTYFVPDVAYHLTKWQRGYERAITELGADHHGSLTRVRAGLQAMELGIPQGWPEYVLHQMVTVMRGGEEVKLSKRAGSYVTLRDLIEETSADAVRWFLIARKPDSQLTFDIDLARAQSNDNPVFYVQYAHARVCSVLRQAQEKGLKYDQTHGMAELARLDDEHSLALMLELSRYAEVVELAGQTLEPYQIAQYLRELAHAFHTWYHNSKVLVDDAAERDAKLTLAVATQQVLANGLELLGVSAPEKM</sequence>
<comment type="catalytic activity">
    <reaction evidence="1">
        <text>tRNA(Arg) + L-arginine + ATP = L-arginyl-tRNA(Arg) + AMP + diphosphate</text>
        <dbReference type="Rhea" id="RHEA:20301"/>
        <dbReference type="Rhea" id="RHEA-COMP:9658"/>
        <dbReference type="Rhea" id="RHEA-COMP:9673"/>
        <dbReference type="ChEBI" id="CHEBI:30616"/>
        <dbReference type="ChEBI" id="CHEBI:32682"/>
        <dbReference type="ChEBI" id="CHEBI:33019"/>
        <dbReference type="ChEBI" id="CHEBI:78442"/>
        <dbReference type="ChEBI" id="CHEBI:78513"/>
        <dbReference type="ChEBI" id="CHEBI:456215"/>
        <dbReference type="EC" id="6.1.1.19"/>
    </reaction>
</comment>
<comment type="subunit">
    <text evidence="1">Monomer.</text>
</comment>
<comment type="subcellular location">
    <subcellularLocation>
        <location evidence="1">Cytoplasm</location>
    </subcellularLocation>
</comment>
<comment type="similarity">
    <text evidence="1">Belongs to the class-I aminoacyl-tRNA synthetase family.</text>
</comment>
<keyword id="KW-0030">Aminoacyl-tRNA synthetase</keyword>
<keyword id="KW-0067">ATP-binding</keyword>
<keyword id="KW-0963">Cytoplasm</keyword>
<keyword id="KW-0436">Ligase</keyword>
<keyword id="KW-0547">Nucleotide-binding</keyword>
<keyword id="KW-0648">Protein biosynthesis</keyword>
<proteinExistence type="inferred from homology"/>